<name>HSCA_LARHH</name>
<comment type="function">
    <text evidence="1">Chaperone involved in the maturation of iron-sulfur cluster-containing proteins. Has a low intrinsic ATPase activity which is markedly stimulated by HscB.</text>
</comment>
<comment type="similarity">
    <text evidence="1">Belongs to the heat shock protein 70 family.</text>
</comment>
<gene>
    <name evidence="1" type="primary">hscA</name>
    <name type="ordered locus">LHK_02861</name>
</gene>
<sequence length="619" mass="66079">MALLQIAEPGLSAAPHQHRLAVGIDLGTTNSLVATVRSGAATVLPDEHGYHLLPSVVRYTEDGATEVGYAARAHQSDDPHNTVVSVKRFMGRGLSDLADAAATPYRFVDAPGMVRLVTRQGEKSPVEVSADILRALKARAESSLGGELTGAVITVPAYFDDAQRQATKDAARLAGLNVLRLLNEPTAAAIAYGLDNAAEGTYVVYDLGGGTFDVSILRLTRGVFEVLATSGDSALGGDDFDHRIYCWLLEKAGLSQLPDGDIRRLLTLARAAKEHLTDNTSARINTVLSDRQVIDLELSRDELAAITRTLVDKTLLPVRRALRDARISVDDVKGVVLVGGATRMPQVRRAVGDFFKRPPLTNLDPDQVVAIGAAMQANVLAGNKGEDDWLLLDVTPLSLGLETMGGLVEKIIPRNSTIPTARAQEFTTFKDGQTAMAVHVLQGERELVSDCRSLARFELRGIPPMVAGAARIRVTFQVDADGLLSVAAREQSSGVEASITIKPSYGLTDDQITQMLTDSLAHVKDDIAARKLREAVVDAESLIATTDAALKSDGDLLAPSELQAIDNAVAALRSAIAAQQTVAINAATARLNDATNDFASRRMDRNIRRALAGQKISDL</sequence>
<organism>
    <name type="scientific">Laribacter hongkongensis (strain HLHK9)</name>
    <dbReference type="NCBI Taxonomy" id="557598"/>
    <lineage>
        <taxon>Bacteria</taxon>
        <taxon>Pseudomonadati</taxon>
        <taxon>Pseudomonadota</taxon>
        <taxon>Betaproteobacteria</taxon>
        <taxon>Neisseriales</taxon>
        <taxon>Aquaspirillaceae</taxon>
        <taxon>Laribacter</taxon>
    </lineage>
</organism>
<dbReference type="EMBL" id="CP001154">
    <property type="protein sequence ID" value="ACO75840.1"/>
    <property type="molecule type" value="Genomic_DNA"/>
</dbReference>
<dbReference type="RefSeq" id="WP_012698303.1">
    <property type="nucleotide sequence ID" value="NC_012559.1"/>
</dbReference>
<dbReference type="SMR" id="C1D4P9"/>
<dbReference type="STRING" id="557598.LHK_02861"/>
<dbReference type="GeneID" id="75110196"/>
<dbReference type="KEGG" id="lhk:LHK_02861"/>
<dbReference type="eggNOG" id="COG0443">
    <property type="taxonomic scope" value="Bacteria"/>
</dbReference>
<dbReference type="HOGENOM" id="CLU_005965_2_4_4"/>
<dbReference type="Proteomes" id="UP000002010">
    <property type="component" value="Chromosome"/>
</dbReference>
<dbReference type="GO" id="GO:0005524">
    <property type="term" value="F:ATP binding"/>
    <property type="evidence" value="ECO:0007669"/>
    <property type="project" value="UniProtKB-KW"/>
</dbReference>
<dbReference type="GO" id="GO:0016887">
    <property type="term" value="F:ATP hydrolysis activity"/>
    <property type="evidence" value="ECO:0007669"/>
    <property type="project" value="UniProtKB-UniRule"/>
</dbReference>
<dbReference type="GO" id="GO:0140662">
    <property type="term" value="F:ATP-dependent protein folding chaperone"/>
    <property type="evidence" value="ECO:0007669"/>
    <property type="project" value="InterPro"/>
</dbReference>
<dbReference type="GO" id="GO:0051082">
    <property type="term" value="F:unfolded protein binding"/>
    <property type="evidence" value="ECO:0007669"/>
    <property type="project" value="InterPro"/>
</dbReference>
<dbReference type="GO" id="GO:0016226">
    <property type="term" value="P:iron-sulfur cluster assembly"/>
    <property type="evidence" value="ECO:0007669"/>
    <property type="project" value="InterPro"/>
</dbReference>
<dbReference type="CDD" id="cd10236">
    <property type="entry name" value="ASKHA_NBD_HSP70_HscA"/>
    <property type="match status" value="1"/>
</dbReference>
<dbReference type="FunFam" id="3.30.420.40:FF:000046">
    <property type="entry name" value="Chaperone protein HscA"/>
    <property type="match status" value="1"/>
</dbReference>
<dbReference type="FunFam" id="2.60.34.10:FF:000005">
    <property type="entry name" value="Chaperone protein HscA homolog"/>
    <property type="match status" value="1"/>
</dbReference>
<dbReference type="Gene3D" id="1.20.1270.10">
    <property type="match status" value="1"/>
</dbReference>
<dbReference type="Gene3D" id="3.30.420.40">
    <property type="match status" value="2"/>
</dbReference>
<dbReference type="Gene3D" id="3.90.640.10">
    <property type="entry name" value="Actin, Chain A, domain 4"/>
    <property type="match status" value="1"/>
</dbReference>
<dbReference type="Gene3D" id="2.60.34.10">
    <property type="entry name" value="Substrate Binding Domain Of DNAk, Chain A, domain 1"/>
    <property type="match status" value="1"/>
</dbReference>
<dbReference type="HAMAP" id="MF_00679">
    <property type="entry name" value="HscA"/>
    <property type="match status" value="1"/>
</dbReference>
<dbReference type="InterPro" id="IPR043129">
    <property type="entry name" value="ATPase_NBD"/>
</dbReference>
<dbReference type="InterPro" id="IPR018181">
    <property type="entry name" value="Heat_shock_70_CS"/>
</dbReference>
<dbReference type="InterPro" id="IPR042039">
    <property type="entry name" value="HscA_NBD"/>
</dbReference>
<dbReference type="InterPro" id="IPR029048">
    <property type="entry name" value="HSP70_C_sf"/>
</dbReference>
<dbReference type="InterPro" id="IPR029047">
    <property type="entry name" value="HSP70_peptide-bd_sf"/>
</dbReference>
<dbReference type="InterPro" id="IPR013126">
    <property type="entry name" value="Hsp_70_fam"/>
</dbReference>
<dbReference type="InterPro" id="IPR010236">
    <property type="entry name" value="ISC_FeS_clus_asmbl_HscA"/>
</dbReference>
<dbReference type="NCBIfam" id="TIGR01991">
    <property type="entry name" value="HscA"/>
    <property type="match status" value="1"/>
</dbReference>
<dbReference type="NCBIfam" id="NF003520">
    <property type="entry name" value="PRK05183.1"/>
    <property type="match status" value="1"/>
</dbReference>
<dbReference type="PANTHER" id="PTHR19375">
    <property type="entry name" value="HEAT SHOCK PROTEIN 70KDA"/>
    <property type="match status" value="1"/>
</dbReference>
<dbReference type="Pfam" id="PF00012">
    <property type="entry name" value="HSP70"/>
    <property type="match status" value="1"/>
</dbReference>
<dbReference type="PRINTS" id="PR00301">
    <property type="entry name" value="HEATSHOCK70"/>
</dbReference>
<dbReference type="SUPFAM" id="SSF53067">
    <property type="entry name" value="Actin-like ATPase domain"/>
    <property type="match status" value="2"/>
</dbReference>
<dbReference type="SUPFAM" id="SSF100934">
    <property type="entry name" value="Heat shock protein 70kD (HSP70), C-terminal subdomain"/>
    <property type="match status" value="1"/>
</dbReference>
<dbReference type="SUPFAM" id="SSF100920">
    <property type="entry name" value="Heat shock protein 70kD (HSP70), peptide-binding domain"/>
    <property type="match status" value="1"/>
</dbReference>
<dbReference type="PROSITE" id="PS00297">
    <property type="entry name" value="HSP70_1"/>
    <property type="match status" value="1"/>
</dbReference>
<dbReference type="PROSITE" id="PS00329">
    <property type="entry name" value="HSP70_2"/>
    <property type="match status" value="1"/>
</dbReference>
<dbReference type="PROSITE" id="PS01036">
    <property type="entry name" value="HSP70_3"/>
    <property type="match status" value="1"/>
</dbReference>
<proteinExistence type="inferred from homology"/>
<feature type="chain" id="PRO_1000147717" description="Chaperone protein HscA homolog">
    <location>
        <begin position="1"/>
        <end position="619"/>
    </location>
</feature>
<evidence type="ECO:0000255" key="1">
    <source>
        <dbReference type="HAMAP-Rule" id="MF_00679"/>
    </source>
</evidence>
<protein>
    <recommendedName>
        <fullName evidence="1">Chaperone protein HscA homolog</fullName>
    </recommendedName>
</protein>
<keyword id="KW-0067">ATP-binding</keyword>
<keyword id="KW-0143">Chaperone</keyword>
<keyword id="KW-0547">Nucleotide-binding</keyword>
<keyword id="KW-1185">Reference proteome</keyword>
<reference key="1">
    <citation type="journal article" date="2009" name="PLoS Genet.">
        <title>The complete genome and proteome of Laribacter hongkongensis reveal potential mechanisms for adaptations to different temperatures and habitats.</title>
        <authorList>
            <person name="Woo P.C.Y."/>
            <person name="Lau S.K.P."/>
            <person name="Tse H."/>
            <person name="Teng J.L.L."/>
            <person name="Curreem S.O."/>
            <person name="Tsang A.K.L."/>
            <person name="Fan R.Y.Y."/>
            <person name="Wong G.K.M."/>
            <person name="Huang Y."/>
            <person name="Loman N.J."/>
            <person name="Snyder L.A.S."/>
            <person name="Cai J.J."/>
            <person name="Huang J.-D."/>
            <person name="Mak W."/>
            <person name="Pallen M.J."/>
            <person name="Lok S."/>
            <person name="Yuen K.-Y."/>
        </authorList>
    </citation>
    <scope>NUCLEOTIDE SEQUENCE [LARGE SCALE GENOMIC DNA]</scope>
    <source>
        <strain>HLHK9</strain>
    </source>
</reference>
<accession>C1D4P9</accession>